<dbReference type="EMBL" id="CP000505">
    <property type="protein sequence ID" value="ABL77677.1"/>
    <property type="molecule type" value="Genomic_DNA"/>
</dbReference>
<dbReference type="RefSeq" id="WP_011751942.1">
    <property type="nucleotide sequence ID" value="NC_008698.1"/>
</dbReference>
<dbReference type="SMR" id="A1RWU7"/>
<dbReference type="STRING" id="368408.Tpen_0267"/>
<dbReference type="EnsemblBacteria" id="ABL77677">
    <property type="protein sequence ID" value="ABL77677"/>
    <property type="gene ID" value="Tpen_0267"/>
</dbReference>
<dbReference type="GeneID" id="4601685"/>
<dbReference type="KEGG" id="tpe:Tpen_0267"/>
<dbReference type="eggNOG" id="arCOG00469">
    <property type="taxonomic scope" value="Archaea"/>
</dbReference>
<dbReference type="HOGENOM" id="CLU_042324_2_1_2"/>
<dbReference type="OrthoDB" id="7928at2157"/>
<dbReference type="Proteomes" id="UP000000641">
    <property type="component" value="Chromosome"/>
</dbReference>
<dbReference type="GO" id="GO:0005663">
    <property type="term" value="C:DNA replication factor C complex"/>
    <property type="evidence" value="ECO:0007669"/>
    <property type="project" value="InterPro"/>
</dbReference>
<dbReference type="GO" id="GO:0005524">
    <property type="term" value="F:ATP binding"/>
    <property type="evidence" value="ECO:0007669"/>
    <property type="project" value="UniProtKB-UniRule"/>
</dbReference>
<dbReference type="GO" id="GO:0016887">
    <property type="term" value="F:ATP hydrolysis activity"/>
    <property type="evidence" value="ECO:0007669"/>
    <property type="project" value="InterPro"/>
</dbReference>
<dbReference type="GO" id="GO:0003677">
    <property type="term" value="F:DNA binding"/>
    <property type="evidence" value="ECO:0007669"/>
    <property type="project" value="InterPro"/>
</dbReference>
<dbReference type="GO" id="GO:0003689">
    <property type="term" value="F:DNA clamp loader activity"/>
    <property type="evidence" value="ECO:0007669"/>
    <property type="project" value="UniProtKB-UniRule"/>
</dbReference>
<dbReference type="GO" id="GO:0006281">
    <property type="term" value="P:DNA repair"/>
    <property type="evidence" value="ECO:0007669"/>
    <property type="project" value="TreeGrafter"/>
</dbReference>
<dbReference type="GO" id="GO:0006261">
    <property type="term" value="P:DNA-templated DNA replication"/>
    <property type="evidence" value="ECO:0007669"/>
    <property type="project" value="TreeGrafter"/>
</dbReference>
<dbReference type="CDD" id="cd00009">
    <property type="entry name" value="AAA"/>
    <property type="match status" value="1"/>
</dbReference>
<dbReference type="CDD" id="cd18140">
    <property type="entry name" value="HLD_clamp_RFC"/>
    <property type="match status" value="1"/>
</dbReference>
<dbReference type="FunFam" id="1.20.272.10:FF:000029">
    <property type="entry name" value="Replication factor C small subunit"/>
    <property type="match status" value="1"/>
</dbReference>
<dbReference type="FunFam" id="3.40.50.300:FF:000129">
    <property type="entry name" value="Replication factor C subunit 5"/>
    <property type="match status" value="1"/>
</dbReference>
<dbReference type="Gene3D" id="1.10.8.60">
    <property type="match status" value="1"/>
</dbReference>
<dbReference type="Gene3D" id="1.20.272.10">
    <property type="match status" value="1"/>
</dbReference>
<dbReference type="Gene3D" id="3.40.50.300">
    <property type="entry name" value="P-loop containing nucleotide triphosphate hydrolases"/>
    <property type="match status" value="1"/>
</dbReference>
<dbReference type="HAMAP" id="MF_01509">
    <property type="entry name" value="RfcS"/>
    <property type="match status" value="1"/>
</dbReference>
<dbReference type="InterPro" id="IPR003593">
    <property type="entry name" value="AAA+_ATPase"/>
</dbReference>
<dbReference type="InterPro" id="IPR003959">
    <property type="entry name" value="ATPase_AAA_core"/>
</dbReference>
<dbReference type="InterPro" id="IPR000641">
    <property type="entry name" value="CbxX/CfxQ"/>
</dbReference>
<dbReference type="InterPro" id="IPR008921">
    <property type="entry name" value="DNA_pol3_clamp-load_cplx_C"/>
</dbReference>
<dbReference type="InterPro" id="IPR050238">
    <property type="entry name" value="DNA_Rep/Repair_Clamp_Loader"/>
</dbReference>
<dbReference type="InterPro" id="IPR027417">
    <property type="entry name" value="P-loop_NTPase"/>
</dbReference>
<dbReference type="InterPro" id="IPR023748">
    <property type="entry name" value="Rep_factor-C_ssu_arc"/>
</dbReference>
<dbReference type="InterPro" id="IPR013748">
    <property type="entry name" value="Rep_factorC_C"/>
</dbReference>
<dbReference type="InterPro" id="IPR047854">
    <property type="entry name" value="RFC_lid"/>
</dbReference>
<dbReference type="NCBIfam" id="NF001679">
    <property type="entry name" value="PRK00440.1"/>
    <property type="match status" value="1"/>
</dbReference>
<dbReference type="PANTHER" id="PTHR11669">
    <property type="entry name" value="REPLICATION FACTOR C / DNA POLYMERASE III GAMMA-TAU SUBUNIT"/>
    <property type="match status" value="1"/>
</dbReference>
<dbReference type="PANTHER" id="PTHR11669:SF20">
    <property type="entry name" value="REPLICATION FACTOR C SUBUNIT 4"/>
    <property type="match status" value="1"/>
</dbReference>
<dbReference type="Pfam" id="PF00004">
    <property type="entry name" value="AAA"/>
    <property type="match status" value="1"/>
</dbReference>
<dbReference type="Pfam" id="PF21960">
    <property type="entry name" value="RCF1-5-like_lid"/>
    <property type="match status" value="1"/>
</dbReference>
<dbReference type="Pfam" id="PF08542">
    <property type="entry name" value="Rep_fac_C"/>
    <property type="match status" value="1"/>
</dbReference>
<dbReference type="PRINTS" id="PR00819">
    <property type="entry name" value="CBXCFQXSUPER"/>
</dbReference>
<dbReference type="SMART" id="SM00382">
    <property type="entry name" value="AAA"/>
    <property type="match status" value="1"/>
</dbReference>
<dbReference type="SUPFAM" id="SSF52540">
    <property type="entry name" value="P-loop containing nucleoside triphosphate hydrolases"/>
    <property type="match status" value="1"/>
</dbReference>
<dbReference type="SUPFAM" id="SSF48019">
    <property type="entry name" value="post-AAA+ oligomerization domain-like"/>
    <property type="match status" value="1"/>
</dbReference>
<gene>
    <name evidence="1" type="primary">rfcS</name>
    <name type="ordered locus">Tpen_0267</name>
</gene>
<reference key="1">
    <citation type="journal article" date="2008" name="J. Bacteriol.">
        <title>Genome sequence of Thermofilum pendens reveals an exceptional loss of biosynthetic pathways without genome reduction.</title>
        <authorList>
            <person name="Anderson I."/>
            <person name="Rodriguez J."/>
            <person name="Susanti D."/>
            <person name="Porat I."/>
            <person name="Reich C."/>
            <person name="Ulrich L.E."/>
            <person name="Elkins J.G."/>
            <person name="Mavromatis K."/>
            <person name="Lykidis A."/>
            <person name="Kim E."/>
            <person name="Thompson L.S."/>
            <person name="Nolan M."/>
            <person name="Land M."/>
            <person name="Copeland A."/>
            <person name="Lapidus A."/>
            <person name="Lucas S."/>
            <person name="Detter C."/>
            <person name="Zhulin I.B."/>
            <person name="Olsen G.J."/>
            <person name="Whitman W."/>
            <person name="Mukhopadhyay B."/>
            <person name="Bristow J."/>
            <person name="Kyrpides N."/>
        </authorList>
    </citation>
    <scope>NUCLEOTIDE SEQUENCE [LARGE SCALE GENOMIC DNA]</scope>
    <source>
        <strain>DSM 2475 / Hrk 5</strain>
    </source>
</reference>
<name>RFCS_THEPD</name>
<organism>
    <name type="scientific">Thermofilum pendens (strain DSM 2475 / Hrk 5)</name>
    <dbReference type="NCBI Taxonomy" id="368408"/>
    <lineage>
        <taxon>Archaea</taxon>
        <taxon>Thermoproteota</taxon>
        <taxon>Thermoprotei</taxon>
        <taxon>Thermofilales</taxon>
        <taxon>Thermofilaceae</taxon>
        <taxon>Thermofilum</taxon>
    </lineage>
</organism>
<comment type="function">
    <text evidence="1">Part of the RFC clamp loader complex which loads the PCNA sliding clamp onto DNA.</text>
</comment>
<comment type="subunit">
    <text evidence="1">Heteromultimer composed of small subunits (RfcS) and large subunits (RfcL).</text>
</comment>
<comment type="similarity">
    <text evidence="1">Belongs to the activator 1 small subunits family. RfcS subfamily.</text>
</comment>
<proteinExistence type="inferred from homology"/>
<evidence type="ECO:0000255" key="1">
    <source>
        <dbReference type="HAMAP-Rule" id="MF_01509"/>
    </source>
</evidence>
<keyword id="KW-0067">ATP-binding</keyword>
<keyword id="KW-0235">DNA replication</keyword>
<keyword id="KW-0547">Nucleotide-binding</keyword>
<keyword id="KW-1185">Reference proteome</keyword>
<accession>A1RWU7</accession>
<sequence>MSEELWVEKYRPRSLDEIVDQEEIVKRLKEFVKNKNMPHLLFAGPPGTGKTTAALALAHDLYGESWRDNTLELNASDERGIDVIRSRIKDYARTLPIGDVPFKLVILDEADNMTGDAQQALRRTMELFSRNTRFILIANYASKIIEPIQSRCAVFRFQPLPKGDAFQRLRWIAQQEGITVDDGALEAIWEESQGDLRKAINTLQAASAISRNVTEEVVYAALGRVKPKEVREMIESALKGNLLEARDKLRLLLYNYGLSGVDIIRFIHREVLSQKSVRLDDATLAELLVLVGETNYRIVEGSDDEIQLMALLSKLALVSKKAAKG</sequence>
<feature type="chain" id="PRO_0000292191" description="Replication factor C small subunit">
    <location>
        <begin position="1"/>
        <end position="325"/>
    </location>
</feature>
<feature type="binding site" evidence="1">
    <location>
        <begin position="44"/>
        <end position="51"/>
    </location>
    <ligand>
        <name>ATP</name>
        <dbReference type="ChEBI" id="CHEBI:30616"/>
    </ligand>
</feature>
<protein>
    <recommendedName>
        <fullName evidence="1">Replication factor C small subunit</fullName>
        <shortName evidence="1">RFC small subunit</shortName>
    </recommendedName>
    <alternativeName>
        <fullName evidence="1">Clamp loader small subunit</fullName>
    </alternativeName>
</protein>